<comment type="function">
    <text evidence="3 4 5 6 7 8 9 10 11 12 13 14 15">Brainstem-restricted receptor for GDF15 hormone, which triggers an aversive response, characterized by nausea, vomiting, and/or loss of appetite in response to various stresses (PubMed:28846097, PubMed:28846098, PubMed:28846099, PubMed:28953886, PubMed:31152154, PubMed:31928886, PubMed:32723474, PubMed:33593916, PubMed:35202387, PubMed:36630958, PubMed:37380764). The aversive response is both required to reduce continuing exposure to those stresses at the time of exposure and to promote avoidance behavior in the future (PubMed:28846097, PubMed:28846098, PubMed:28846099, PubMed:28953886, PubMed:31928886, PubMed:32723474, PubMed:33593916, PubMed:35202387, PubMed:36630958). The GDF15-GFRAL aversive response is triggered by stresses, such as anticancer drugs (camptothecin or cisplatin), cancers or drugs such as metformin (PubMed:31875646, PubMed:31928886, PubMed:32661391, PubMed:32723474). Upon interaction with its ligand, GDF15, mediates the GDF15-induced autophosphorylation and activation of the RET tyrosine kinase receptor, leading to activation of MAPK- and AKT- signaling pathways (PubMed:28846098, PubMed:28846099, PubMed:32723474, PubMed:33593916). Ligand-binding activates GFRAL-expressing neurons localized in the area postrema and nucleus tractus solitarius of the brainstem (PubMed:28846098, PubMed:28846099, PubMed:31152154, PubMed:32723474). The GDF15-GFRAL signal induces expression of genes involved in metabolism, such as lipid metabolism in adipose tissues (PubMed:32661391).</text>
</comment>
<comment type="activity regulation">
    <text evidence="10 14">Specifically inhibited by 3P10 monoclonal antibody (PubMed:32661391). Strongly activated by LY3463251, a long-acting and stable agonist composed of GDF15 conjugated monomeric human IgG4 Fc (PubMed:36630958).</text>
</comment>
<comment type="subunit">
    <text evidence="4 5">Interacts (via the extracellular domain) with GDF15 and RET; receptor of GDF15, mediates cellular signaling through interaction with RET after GDF15-binding (PubMed:28846098, PubMed:28846099). Interaction with RET requires previous GDF15-binding (PubMed:28846099).</text>
</comment>
<comment type="subcellular location">
    <subcellularLocation>
        <location evidence="1">Cell membrane</location>
        <topology evidence="17">Single-pass membrane protein</topology>
        <orientation evidence="17">Extracellular side</orientation>
    </subcellularLocation>
</comment>
<comment type="alternative products">
    <event type="alternative splicing"/>
    <isoform>
        <id>Q6SJE0-1</id>
        <name>A</name>
        <sequence type="displayed"/>
    </isoform>
    <isoform>
        <id>Q6SJE0-2</id>
        <name>B</name>
        <sequence type="described" ref="VSP_019295 VSP_019296"/>
    </isoform>
</comment>
<comment type="tissue specificity">
    <text evidence="3 5 6">Expressed in the brainstem, restricted to cells in the area postrema and the immediately adjacent region of the nucleus tractus solitarius.</text>
</comment>
<comment type="PTM">
    <text evidence="18">Cleaved and inactivated by MMP14, inhibiting the GDF15-GFRAL aversive response.</text>
</comment>
<comment type="disruption phenotype">
    <text evidence="3 4 5 6 8">On a chow diet, mutants show no difference in food intake, energy expenditure or body weight compare to wild-type controls. On high-fat diet, they gain substantially more weight and are more glucose intolerant. Diet-induced obese mutants are hyperphagic and have 32% greater total mass and 9% greater lean mass than diet-induced obese wild-type mice (PubMed:28846097, PubMed:28846099, PubMed:28953886). Upon chronical administration of GDF15, mutants are refractory to the GDF15 effects in comparison to wild-types that show attenuated food-intake and sustained weightloss (PubMed:28846097, PubMed:28846098, PubMed:28846099, PubMed:28953886). Reduced effect of metformin drug on appetite reduction and weight loss in mutant mice (PubMed:31875646).</text>
</comment>
<comment type="similarity">
    <text evidence="17">Belongs to the GDNFR family.</text>
</comment>
<protein>
    <recommendedName>
        <fullName>GDNF family receptor alpha-like</fullName>
    </recommendedName>
</protein>
<dbReference type="EMBL" id="AY457637">
    <property type="protein sequence ID" value="AAS13632.2"/>
    <property type="molecule type" value="mRNA"/>
</dbReference>
<dbReference type="EMBL" id="AY457638">
    <property type="protein sequence ID" value="AAS13633.1"/>
    <property type="molecule type" value="mRNA"/>
</dbReference>
<dbReference type="CCDS" id="CCDS40694.1">
    <molecule id="Q6SJE0-1"/>
</dbReference>
<dbReference type="RefSeq" id="NP_995316.2">
    <molecule id="Q6SJE0-1"/>
    <property type="nucleotide sequence ID" value="NM_205844.3"/>
</dbReference>
<dbReference type="SMR" id="Q6SJE0"/>
<dbReference type="FunCoup" id="Q6SJE0">
    <property type="interactions" value="38"/>
</dbReference>
<dbReference type="STRING" id="10090.ENSMUSP00000074421"/>
<dbReference type="GuidetoPHARMACOLOGY" id="2977"/>
<dbReference type="GlyCosmos" id="Q6SJE0">
    <property type="glycosylation" value="4 sites, No reported glycans"/>
</dbReference>
<dbReference type="GlyGen" id="Q6SJE0">
    <property type="glycosylation" value="5 sites"/>
</dbReference>
<dbReference type="PaxDb" id="10090-ENSMUSP00000074421"/>
<dbReference type="Antibodypedia" id="54700">
    <property type="antibodies" value="137 antibodies from 20 providers"/>
</dbReference>
<dbReference type="DNASU" id="404194"/>
<dbReference type="Ensembl" id="ENSMUST00000074880.6">
    <molecule id="Q6SJE0-1"/>
    <property type="protein sequence ID" value="ENSMUSP00000074421.6"/>
    <property type="gene ID" value="ENSMUSG00000059383.15"/>
</dbReference>
<dbReference type="Ensembl" id="ENSMUST00000184693.8">
    <molecule id="Q6SJE0-2"/>
    <property type="protein sequence ID" value="ENSMUSP00000139120.2"/>
    <property type="gene ID" value="ENSMUSG00000059383.15"/>
</dbReference>
<dbReference type="GeneID" id="404194"/>
<dbReference type="KEGG" id="mmu:404194"/>
<dbReference type="UCSC" id="uc009qsy.1">
    <molecule id="Q6SJE0-1"/>
    <property type="organism name" value="mouse"/>
</dbReference>
<dbReference type="AGR" id="MGI:3607786"/>
<dbReference type="CTD" id="389400"/>
<dbReference type="MGI" id="MGI:3607786">
    <property type="gene designation" value="Gfral"/>
</dbReference>
<dbReference type="VEuPathDB" id="HostDB:ENSMUSG00000059383"/>
<dbReference type="eggNOG" id="ENOG502RCJT">
    <property type="taxonomic scope" value="Eukaryota"/>
</dbReference>
<dbReference type="GeneTree" id="ENSGT00730000111274"/>
<dbReference type="HOGENOM" id="CLU_058745_0_0_1"/>
<dbReference type="InParanoid" id="Q6SJE0"/>
<dbReference type="OMA" id="NVIHSCR"/>
<dbReference type="OrthoDB" id="8735237at2759"/>
<dbReference type="PhylomeDB" id="Q6SJE0"/>
<dbReference type="TreeFam" id="TF331647"/>
<dbReference type="BioGRID-ORCS" id="404194">
    <property type="hits" value="2 hits in 77 CRISPR screens"/>
</dbReference>
<dbReference type="PRO" id="PR:Q6SJE0"/>
<dbReference type="Proteomes" id="UP000000589">
    <property type="component" value="Chromosome 9"/>
</dbReference>
<dbReference type="RNAct" id="Q6SJE0">
    <property type="molecule type" value="protein"/>
</dbReference>
<dbReference type="Bgee" id="ENSMUSG00000059383">
    <property type="expression patterns" value="Expressed in mesodermal cell in embryo"/>
</dbReference>
<dbReference type="GO" id="GO:0015629">
    <property type="term" value="C:actin cytoskeleton"/>
    <property type="evidence" value="ECO:0007669"/>
    <property type="project" value="Ensembl"/>
</dbReference>
<dbReference type="GO" id="GO:0005925">
    <property type="term" value="C:focal adhesion"/>
    <property type="evidence" value="ECO:0007669"/>
    <property type="project" value="Ensembl"/>
</dbReference>
<dbReference type="GO" id="GO:0005654">
    <property type="term" value="C:nucleoplasm"/>
    <property type="evidence" value="ECO:0007669"/>
    <property type="project" value="Ensembl"/>
</dbReference>
<dbReference type="GO" id="GO:0005886">
    <property type="term" value="C:plasma membrane"/>
    <property type="evidence" value="ECO:0000314"/>
    <property type="project" value="MGI"/>
</dbReference>
<dbReference type="GO" id="GO:0016167">
    <property type="term" value="F:glial cell-derived neurotrophic factor receptor activity"/>
    <property type="evidence" value="ECO:0000314"/>
    <property type="project" value="UniProtKB"/>
</dbReference>
<dbReference type="GO" id="GO:0005179">
    <property type="term" value="F:hormone activity"/>
    <property type="evidence" value="ECO:0007669"/>
    <property type="project" value="UniProtKB-KW"/>
</dbReference>
<dbReference type="GO" id="GO:0030971">
    <property type="term" value="F:receptor tyrosine kinase binding"/>
    <property type="evidence" value="ECO:0000353"/>
    <property type="project" value="UniProtKB"/>
</dbReference>
<dbReference type="GO" id="GO:0160144">
    <property type="term" value="P:GDF15-GFRAL signaling pathway"/>
    <property type="evidence" value="ECO:0000314"/>
    <property type="project" value="UniProtKB"/>
</dbReference>
<dbReference type="GO" id="GO:0032099">
    <property type="term" value="P:negative regulation of appetite"/>
    <property type="evidence" value="ECO:0000314"/>
    <property type="project" value="UniProtKB"/>
</dbReference>
<dbReference type="GO" id="GO:2001240">
    <property type="term" value="P:negative regulation of extrinsic apoptotic signaling pathway in absence of ligand"/>
    <property type="evidence" value="ECO:0000314"/>
    <property type="project" value="MGI"/>
</dbReference>
<dbReference type="GO" id="GO:0043524">
    <property type="term" value="P:negative regulation of neuron apoptotic process"/>
    <property type="evidence" value="ECO:0000314"/>
    <property type="project" value="MGI"/>
</dbReference>
<dbReference type="GO" id="GO:0043410">
    <property type="term" value="P:positive regulation of MAPK cascade"/>
    <property type="evidence" value="ECO:0000315"/>
    <property type="project" value="GO_Central"/>
</dbReference>
<dbReference type="GO" id="GO:0051897">
    <property type="term" value="P:positive regulation of phosphatidylinositol 3-kinase/protein kinase B signal transduction"/>
    <property type="evidence" value="ECO:0000250"/>
    <property type="project" value="UniProtKB"/>
</dbReference>
<dbReference type="GO" id="GO:0002023">
    <property type="term" value="P:reduction of food intake in response to dietary excess"/>
    <property type="evidence" value="ECO:0000314"/>
    <property type="project" value="UniProtKB"/>
</dbReference>
<dbReference type="GO" id="GO:1901558">
    <property type="term" value="P:response to metformin"/>
    <property type="evidence" value="ECO:0000315"/>
    <property type="project" value="UniProtKB"/>
</dbReference>
<dbReference type="GO" id="GO:0031098">
    <property type="term" value="P:stress-activated protein kinase signaling cascade"/>
    <property type="evidence" value="ECO:0000314"/>
    <property type="project" value="MGI"/>
</dbReference>
<dbReference type="InterPro" id="IPR016017">
    <property type="entry name" value="GDNF/GAS1"/>
</dbReference>
<dbReference type="InterPro" id="IPR037193">
    <property type="entry name" value="GDNF_alpha"/>
</dbReference>
<dbReference type="InterPro" id="IPR003438">
    <property type="entry name" value="GDNF_rcpt"/>
</dbReference>
<dbReference type="PANTHER" id="PTHR10269:SF1">
    <property type="entry name" value="GDNF FAMILY RECEPTOR ALPHA-LIKE"/>
    <property type="match status" value="1"/>
</dbReference>
<dbReference type="PANTHER" id="PTHR10269">
    <property type="entry name" value="GDNF RECEPTOR ALPHA"/>
    <property type="match status" value="1"/>
</dbReference>
<dbReference type="Pfam" id="PF02351">
    <property type="entry name" value="GDNF"/>
    <property type="match status" value="2"/>
</dbReference>
<dbReference type="SMART" id="SM00907">
    <property type="entry name" value="GDNF"/>
    <property type="match status" value="3"/>
</dbReference>
<dbReference type="SUPFAM" id="SSF110035">
    <property type="entry name" value="GDNF receptor-like"/>
    <property type="match status" value="2"/>
</dbReference>
<feature type="signal peptide" evidence="2">
    <location>
        <begin position="1"/>
        <end position="19"/>
    </location>
</feature>
<feature type="chain" id="PRO_0000240125" description="GDNF family receptor alpha-like">
    <location>
        <begin position="20"/>
        <end position="393"/>
    </location>
</feature>
<feature type="topological domain" description="Extracellular" evidence="2">
    <location>
        <begin position="20"/>
        <end position="349"/>
    </location>
</feature>
<feature type="transmembrane region" description="Helical" evidence="2">
    <location>
        <begin position="350"/>
        <end position="370"/>
    </location>
</feature>
<feature type="topological domain" description="Cytoplasmic" evidence="2">
    <location>
        <begin position="371"/>
        <end position="393"/>
    </location>
</feature>
<feature type="region of interest" description="Required for interaction with GDF15" evidence="1">
    <location>
        <begin position="149"/>
        <end position="228"/>
    </location>
</feature>
<feature type="glycosylation site" description="N-linked (GlcNAc...) asparagine" evidence="2">
    <location>
        <position position="59"/>
    </location>
</feature>
<feature type="glycosylation site" description="N-linked (GlcNAc...) asparagine" evidence="2">
    <location>
        <position position="65"/>
    </location>
</feature>
<feature type="glycosylation site" description="N-linked (GlcNAc...) asparagine" evidence="2">
    <location>
        <position position="101"/>
    </location>
</feature>
<feature type="glycosylation site" description="N-linked (GlcNAc...) asparagine" evidence="2">
    <location>
        <position position="115"/>
    </location>
</feature>
<feature type="disulfide bond" evidence="1">
    <location>
        <begin position="131"/>
        <end position="189"/>
    </location>
</feature>
<feature type="disulfide bond" evidence="1">
    <location>
        <begin position="138"/>
        <end position="144"/>
    </location>
</feature>
<feature type="disulfide bond" evidence="1">
    <location>
        <begin position="155"/>
        <end position="167"/>
    </location>
</feature>
<feature type="disulfide bond" evidence="1">
    <location>
        <begin position="162"/>
        <end position="210"/>
    </location>
</feature>
<feature type="disulfide bond" evidence="1">
    <location>
        <begin position="191"/>
        <end position="198"/>
    </location>
</feature>
<feature type="disulfide bond" evidence="1">
    <location>
        <begin position="220"/>
        <end position="291"/>
    </location>
</feature>
<feature type="disulfide bond" evidence="1">
    <location>
        <begin position="227"/>
        <end position="233"/>
    </location>
</feature>
<feature type="disulfide bond" evidence="1">
    <location>
        <begin position="244"/>
        <end position="275"/>
    </location>
</feature>
<feature type="disulfide bond" evidence="1">
    <location>
        <begin position="252"/>
        <end position="258"/>
    </location>
</feature>
<feature type="disulfide bond" evidence="1">
    <location>
        <begin position="269"/>
        <end position="316"/>
    </location>
</feature>
<feature type="disulfide bond" evidence="1">
    <location>
        <begin position="293"/>
        <end position="304"/>
    </location>
</feature>
<feature type="splice variant" id="VSP_019295" description="In isoform B." evidence="16">
    <original>THYR</original>
    <variation>LPNS</variation>
    <location>
        <begin position="235"/>
        <end position="238"/>
    </location>
</feature>
<feature type="splice variant" id="VSP_019296" description="In isoform B." evidence="16">
    <location>
        <begin position="239"/>
        <end position="393"/>
    </location>
</feature>
<feature type="sequence conflict" description="In Ref. 1; AAS13633." evidence="17" ref="1">
    <original>Q</original>
    <variation>P</variation>
    <location>
        <position position="20"/>
    </location>
</feature>
<gene>
    <name type="primary">Gfral</name>
    <name type="synonym">Gral</name>
</gene>
<sequence length="393" mass="43964">MLVFIFLAVTLSSENESSSQTNDCAHLIQKCLIDANGCEQSWRSMEDTCLTPGDSCKINNSLHCNLSIQALVEKNFQFKECLCMDDLHCTVNKLFGKKCTNKTDNMEKDNKDKWNLTTTPFYHGFKQMQSCLEVTEACVGDVVCNAQLALYLKACSANGNLCDVKHCQAAIRFFYQNMPFNTAQMLAFCDCAQSDIPCQQSKETLHSKPCALNIVPPPTCLSVIHTCRNDELCRTHYRTFQTECWPHITGKCHEDETCISMLGKQDLTCSGSESCRAAFLGTFGTVLQVPCACRGVTQAEEHVCMIFQHMLHSKSCFNYPTPNVKDISSYEKKNSKEITLTGFNSFFNGELLYVVVCMAVTCGILFLVMLKLRIQSEKRDPSSIEIAGGVIIQ</sequence>
<proteinExistence type="evidence at protein level"/>
<accession>Q6SJE0</accession>
<accession>Q6SJD9</accession>
<name>GFRAL_MOUSE</name>
<reference key="1">
    <citation type="submission" date="2004-06" db="EMBL/GenBank/DDBJ databases">
        <title>Molecular cloning and characterization of GRAL, a novel GDNF receptor alpha-like gene.</title>
        <authorList>
            <person name="Li Z."/>
            <person name="Wang B."/>
            <person name="Zhou J."/>
        </authorList>
    </citation>
    <scope>NUCLEOTIDE SEQUENCE [MRNA] (ISOFORMS A AND B)</scope>
    <source>
        <strain>C57BL/6J</strain>
    </source>
</reference>
<reference key="2">
    <citation type="journal article" date="2017" name="Nature">
        <title>Non-homeostatic body weight regulation through a brainstem-restricted receptor for GDF15.</title>
        <authorList>
            <person name="Hsu J.Y."/>
            <person name="Crawley S."/>
            <person name="Chen M."/>
            <person name="Ayupova D.A."/>
            <person name="Lindhout D.A."/>
            <person name="Higbee J."/>
            <person name="Kutach A."/>
            <person name="Joo W."/>
            <person name="Gao Z."/>
            <person name="Fu D."/>
            <person name="To C."/>
            <person name="Mondal K."/>
            <person name="Li B."/>
            <person name="Kekatpure A."/>
            <person name="Wang M."/>
            <person name="Laird T."/>
            <person name="Horner G."/>
            <person name="Chan J."/>
            <person name="McEntee M."/>
            <person name="Lopez M."/>
            <person name="Lakshminarasimhan D."/>
            <person name="White A."/>
            <person name="Wang S.P."/>
            <person name="Yao J."/>
            <person name="Yie J."/>
            <person name="Matern H."/>
            <person name="Solloway M."/>
            <person name="Haldankar R."/>
            <person name="Parsons T."/>
            <person name="Tang J."/>
            <person name="Shen W.D."/>
            <person name="Alice Chen Y."/>
            <person name="Tian H."/>
            <person name="Allan B.B."/>
        </authorList>
    </citation>
    <scope>DISRUPTION PHENOTYPE</scope>
    <scope>FUNCTION</scope>
    <scope>TISSUE SPECIFICITY</scope>
</reference>
<reference key="3">
    <citation type="journal article" date="2017" name="Nature">
        <title>Non-homeostatic body weight regulation through a brainstem-restricted receptor for GDF15.</title>
        <authorList>
            <person name="Hsu J.Y."/>
            <person name="Crawley S."/>
            <person name="Chen M."/>
            <person name="Ayupova D.A."/>
            <person name="Lindhout D.A."/>
            <person name="Higbee J."/>
            <person name="Kutach A."/>
            <person name="Joo W."/>
            <person name="Gao Z."/>
            <person name="Fu D."/>
            <person name="To C."/>
            <person name="Mondal K."/>
            <person name="Li B."/>
            <person name="Kekatpure A."/>
            <person name="Wang M."/>
            <person name="Laird T."/>
            <person name="Horner G."/>
            <person name="Chan J."/>
            <person name="McEntee M."/>
            <person name="Lopez M."/>
            <person name="Lakshminarasimhan D."/>
            <person name="White A."/>
            <person name="Wang S.P."/>
            <person name="Yao J."/>
            <person name="Yie J."/>
            <person name="Matern H."/>
            <person name="Solloway M."/>
            <person name="Haldankar R."/>
            <person name="Parsons T."/>
            <person name="Tang J."/>
            <person name="Shen W.D."/>
            <person name="Alice Chen Y."/>
            <person name="Tian H."/>
            <person name="Allan B.B."/>
        </authorList>
    </citation>
    <scope>ERRATUM OF PUBMED:28953886</scope>
</reference>
<reference key="4">
    <citation type="journal article" date="2017" name="Nat. Med.">
        <title>The metabolic effects of GDF15 are mediated by the orphan receptor GFRAL.</title>
        <authorList>
            <person name="Emmerson P.J."/>
            <person name="Wang F."/>
            <person name="Du Y."/>
            <person name="Liu Q."/>
            <person name="Pickard R.T."/>
            <person name="Gonciarz M.D."/>
            <person name="Coskun T."/>
            <person name="Hamang M.J."/>
            <person name="Sindelar D.K."/>
            <person name="Ballman K.K."/>
            <person name="Foltz L.A."/>
            <person name="Muppidi A."/>
            <person name="Alsina-Fernandez J."/>
            <person name="Barnard G.C."/>
            <person name="Tang J.X."/>
            <person name="Liu X."/>
            <person name="Mao X."/>
            <person name="Siegel R."/>
            <person name="Sloan J.H."/>
            <person name="Mitchell P.J."/>
            <person name="Zhang B.B."/>
            <person name="Gimeno R.E."/>
            <person name="Shan B."/>
            <person name="Wu X."/>
        </authorList>
    </citation>
    <scope>DISRUPTION PHENOTYPE</scope>
    <scope>FUNCTION</scope>
    <scope>INTERACTION WITH GDF15</scope>
</reference>
<reference key="5">
    <citation type="journal article" date="2017" name="Nat. Med.">
        <title>GFRAL is the receptor for GDF15 and is required for the anti-obesity effects of the ligand.</title>
        <authorList>
            <person name="Yang L."/>
            <person name="Chang C.C."/>
            <person name="Sun Z."/>
            <person name="Madsen D."/>
            <person name="Zhu H."/>
            <person name="Padkjaer S.B."/>
            <person name="Wu X."/>
            <person name="Huang T."/>
            <person name="Hultman K."/>
            <person name="Paulsen S.J."/>
            <person name="Wang J."/>
            <person name="Bugge A."/>
            <person name="Frantzen J.B."/>
            <person name="Noergaard P."/>
            <person name="Jeppesen J.F."/>
            <person name="Yang Z."/>
            <person name="Secher A."/>
            <person name="Chen H."/>
            <person name="Li X."/>
            <person name="John L.M."/>
            <person name="Shan B."/>
            <person name="He Z."/>
            <person name="Gao X."/>
            <person name="Su J."/>
            <person name="Hansen K.T."/>
            <person name="Yang W."/>
            <person name="Joergensen S.B."/>
        </authorList>
    </citation>
    <scope>FUNCTION</scope>
    <scope>INTERACTION WITH GDF15 AND RET</scope>
    <scope>TISSUE SPECIFICITY</scope>
    <scope>DISRUPTION PHENOTYPE</scope>
</reference>
<reference key="6">
    <citation type="journal article" date="2017" name="Nat. Med.">
        <title>GFRAL is the receptor for GDF15 and the ligand promotes weight loss in mice and nonhuman primates.</title>
        <authorList>
            <person name="Mullican S.E."/>
            <person name="Lin-Schmidt X."/>
            <person name="Chin C.N."/>
            <person name="Chavez J.A."/>
            <person name="Furman J.L."/>
            <person name="Armstrong A.A."/>
            <person name="Beck S.C."/>
            <person name="South V.J."/>
            <person name="Dinh T.Q."/>
            <person name="Cash-Mason T.D."/>
            <person name="Cavanaugh C.R."/>
            <person name="Nelson S."/>
            <person name="Huang C."/>
            <person name="Hunter M.J."/>
            <person name="Rangwala S.M."/>
        </authorList>
    </citation>
    <scope>FUNCTION</scope>
    <scope>TISSUE SPECIFICITY</scope>
    <scope>DISRUPTION PHENOTYPE</scope>
</reference>
<reference key="7">
    <citation type="journal article" date="2019" name="Int. J. Obes. Relat. Metab. Disord.">
        <title>GDF15 mediates adiposity resistance through actions on GFRAL neurons in the hindbrain AP/NTS.</title>
        <authorList>
            <person name="Tsai V.W."/>
            <person name="Zhang H.P."/>
            <person name="Manandhar R."/>
            <person name="Schofield P."/>
            <person name="Christ D."/>
            <person name="Lee-Ng K.K.M."/>
            <person name="Lebhar H."/>
            <person name="Marquis C.P."/>
            <person name="Husaini Y."/>
            <person name="Brown D.A."/>
            <person name="Breit S.N."/>
        </authorList>
    </citation>
    <scope>FUNCTION</scope>
</reference>
<reference key="8">
    <citation type="journal article" date="2020" name="Cell Metab.">
        <title>GDF15 induces anorexia through nausea and emesis.</title>
        <authorList>
            <person name="Borner T."/>
            <person name="Shaulson E.D."/>
            <person name="Ghidewon M.Y."/>
            <person name="Barnett A.B."/>
            <person name="Horn C.C."/>
            <person name="Doyle R.P."/>
            <person name="Grill H.J."/>
            <person name="Hayes M.R."/>
            <person name="De Jonghe B.C."/>
        </authorList>
    </citation>
    <scope>FUNCTION</scope>
</reference>
<reference key="9">
    <citation type="journal article" date="2020" name="Elife">
        <title>The cytokine GDF15 signals through a population of brainstem cholecystokinin neurons to mediate anorectic signalling.</title>
        <authorList>
            <person name="Worth A.A."/>
            <person name="Shoop R."/>
            <person name="Tye K."/>
            <person name="Feetham C.H."/>
            <person name="D'Agostino G."/>
            <person name="Dodd G.T."/>
            <person name="Reimann F."/>
            <person name="Gribble F.M."/>
            <person name="Beebe E.C."/>
            <person name="Dunbar J.D."/>
            <person name="Alexander-Chacko J.T."/>
            <person name="Sindelar D.K."/>
            <person name="Coskun T."/>
            <person name="Emmerson P.J."/>
            <person name="Luckman S.M."/>
        </authorList>
    </citation>
    <scope>FUNCTION</scope>
    <scope>TISSUE SPECIFICITY</scope>
</reference>
<reference key="10">
    <citation type="journal article" date="2020" name="Nature">
        <title>GDF15 mediates the effects of metformin on body weight and energy balance.</title>
        <authorList>
            <person name="Coll A.P."/>
            <person name="Chen M."/>
            <person name="Taskar P."/>
            <person name="Rimmington D."/>
            <person name="Patel S."/>
            <person name="Tadross J.A."/>
            <person name="Cimino I."/>
            <person name="Yang M."/>
            <person name="Welsh P."/>
            <person name="Virtue S."/>
            <person name="Goldspink D.A."/>
            <person name="Miedzybrodzka E.L."/>
            <person name="Konopka A.R."/>
            <person name="Esponda R.R."/>
            <person name="Huang J.T."/>
            <person name="Tung Y.C.L."/>
            <person name="Rodriguez-Cuenca S."/>
            <person name="Tomaz R.A."/>
            <person name="Harding H.P."/>
            <person name="Melvin A."/>
            <person name="Yeo G.S.H."/>
            <person name="Preiss D."/>
            <person name="Vidal-Puig A."/>
            <person name="Vallier L."/>
            <person name="Nair K.S."/>
            <person name="Wareham N.J."/>
            <person name="Ron D."/>
            <person name="Gribble F.M."/>
            <person name="Reimann F."/>
            <person name="Sattar N."/>
            <person name="Savage D.B."/>
            <person name="Allan B.B."/>
            <person name="O'Rahilly S."/>
        </authorList>
    </citation>
    <scope>FUNCTION</scope>
    <scope>DISRUPTION PHENOTYPE</scope>
</reference>
<reference key="11">
    <citation type="journal article" date="2020" name="Nat. Med.">
        <title>Antibody-mediated inhibition of GDF15-GFRAL activity reverses cancer cachexia in mice.</title>
        <authorList>
            <person name="Suriben R."/>
            <person name="Chen M."/>
            <person name="Higbee J."/>
            <person name="Oeffinger J."/>
            <person name="Ventura R."/>
            <person name="Li B."/>
            <person name="Mondal K."/>
            <person name="Gao Z."/>
            <person name="Ayupova D."/>
            <person name="Taskar P."/>
            <person name="Li D."/>
            <person name="Starck S.R."/>
            <person name="Chen H.H."/>
            <person name="McEntee M."/>
            <person name="Katewa S.D."/>
            <person name="Phung V."/>
            <person name="Wang M."/>
            <person name="Kekatpure A."/>
            <person name="Lakshminarasimhan D."/>
            <person name="White A."/>
            <person name="Olland A."/>
            <person name="Haldankar R."/>
            <person name="Solloway M.J."/>
            <person name="Hsu J.Y."/>
            <person name="Wang Y."/>
            <person name="Tang J."/>
            <person name="Lindhout D.A."/>
            <person name="Allan B.B."/>
        </authorList>
    </citation>
    <scope>FUNCTION</scope>
    <scope>ACTIVITY REGULATION</scope>
</reference>
<reference key="12">
    <citation type="journal article" date="2021" name="Proc. Natl. Acad. Sci. U.S.A.">
        <title>GFRAL-expressing neurons suppress food intake via aversive pathways.</title>
        <authorList>
            <person name="Sabatini P.V."/>
            <person name="Frikke-Schmidt H."/>
            <person name="Arthurs J."/>
            <person name="Gordian D."/>
            <person name="Patel A."/>
            <person name="Rupp A.C."/>
            <person name="Adams J.M."/>
            <person name="Wang J."/>
            <person name="Beck Joergensen S."/>
            <person name="Olson D.P."/>
            <person name="Palmiter R.D."/>
            <person name="Myers M.G. Jr."/>
            <person name="Seeley R.J."/>
        </authorList>
    </citation>
    <scope>FUNCTION</scope>
    <scope>DISRUPTION PHENOTYPE</scope>
</reference>
<reference key="13">
    <citation type="journal article" date="2022" name="Nat. Metab.">
        <title>Body weight regulation via MT1-MMP-mediated cleavage of GFRAL.</title>
        <authorList>
            <person name="Chow C.F.W."/>
            <person name="Guo X."/>
            <person name="Asthana P."/>
            <person name="Zhang S."/>
            <person name="Wong S.K.K."/>
            <person name="Fallah S."/>
            <person name="Che S."/>
            <person name="Gurung S."/>
            <person name="Wang Z."/>
            <person name="Lee K.B."/>
            <person name="Ge X."/>
            <person name="Yuan S."/>
            <person name="Xu H."/>
            <person name="Ip J.P.K."/>
            <person name="Jiang Z."/>
            <person name="Zhai L."/>
            <person name="Wu J."/>
            <person name="Zhang Y."/>
            <person name="Mahato A.K."/>
            <person name="Saarma M."/>
            <person name="Lin C.Y."/>
            <person name="Kwan H.Y."/>
            <person name="Huang T."/>
            <person name="Lyu A."/>
            <person name="Zhou Z."/>
            <person name="Bian Z.X."/>
            <person name="Wong H.L.X."/>
        </authorList>
    </citation>
    <scope>PROTEOLYTIC CLEAVAGE</scope>
</reference>
<reference key="14">
    <citation type="journal article" date="2022" name="PLoS Biol.">
        <title>Camptothecin effectively treats obesity in mice through GDF15 induction.</title>
        <authorList>
            <person name="Lu J.F."/>
            <person name="Zhu M.Q."/>
            <person name="Xie B.C."/>
            <person name="Shi X.C."/>
            <person name="Liu H."/>
            <person name="Zhang R.X."/>
            <person name="Xia B."/>
            <person name="Wu J.W."/>
        </authorList>
    </citation>
    <scope>FUNCTION</scope>
</reference>
<reference key="15">
    <citation type="journal article" date="2023" name="Cell Metab.">
        <title>Discovery, development, and clinical proof of mechanism of LY3463251, a long-acting GDF15 receptor agonist.</title>
        <authorList>
            <person name="Benichou O."/>
            <person name="Coskun T."/>
            <person name="Gonciarz M.D."/>
            <person name="Garhyan P."/>
            <person name="Adams A.C."/>
            <person name="Du Y."/>
            <person name="Dunbar J.D."/>
            <person name="Martin J.A."/>
            <person name="Mather K.J."/>
            <person name="Pickard R.T."/>
            <person name="Reynolds V.L."/>
            <person name="Robins D.A."/>
            <person name="Zvada S.P."/>
            <person name="Emmerson P.J."/>
        </authorList>
    </citation>
    <scope>FUNCTION</scope>
    <scope>ACTIVITY REGULATION</scope>
</reference>
<reference key="16">
    <citation type="journal article" date="2023" name="Nature">
        <title>GDF15 promotes weight loss by enhancing energy expenditure in muscle.</title>
        <authorList>
            <person name="Wang D."/>
            <person name="Townsend L.K."/>
            <person name="DesOrmeaux G.J."/>
            <person name="Frangos S.M."/>
            <person name="Batchuluun B."/>
            <person name="Dumont L."/>
            <person name="Kuhre R.E."/>
            <person name="Ahmadi E."/>
            <person name="Hu S."/>
            <person name="Rebalka I.A."/>
            <person name="Gautam J."/>
            <person name="Jabile M.J.T."/>
            <person name="Pileggi C.A."/>
            <person name="Rehal S."/>
            <person name="Desjardins E.M."/>
            <person name="Tsakiridis E.E."/>
            <person name="Lally J.S.V."/>
            <person name="Juracic E.S."/>
            <person name="Tupling A.R."/>
            <person name="Gerstein H.C."/>
            <person name="Pare G."/>
            <person name="Tsakiridis T."/>
            <person name="Harper M.E."/>
            <person name="Hawke T.J."/>
            <person name="Speakman J.R."/>
            <person name="Blondin D.P."/>
            <person name="Holloway G.P."/>
            <person name="Joergensen S.B."/>
            <person name="Steinberg G.R."/>
        </authorList>
    </citation>
    <scope>FUNCTION</scope>
</reference>
<organism>
    <name type="scientific">Mus musculus</name>
    <name type="common">Mouse</name>
    <dbReference type="NCBI Taxonomy" id="10090"/>
    <lineage>
        <taxon>Eukaryota</taxon>
        <taxon>Metazoa</taxon>
        <taxon>Chordata</taxon>
        <taxon>Craniata</taxon>
        <taxon>Vertebrata</taxon>
        <taxon>Euteleostomi</taxon>
        <taxon>Mammalia</taxon>
        <taxon>Eutheria</taxon>
        <taxon>Euarchontoglires</taxon>
        <taxon>Glires</taxon>
        <taxon>Rodentia</taxon>
        <taxon>Myomorpha</taxon>
        <taxon>Muroidea</taxon>
        <taxon>Muridae</taxon>
        <taxon>Murinae</taxon>
        <taxon>Mus</taxon>
        <taxon>Mus</taxon>
    </lineage>
</organism>
<evidence type="ECO:0000250" key="1">
    <source>
        <dbReference type="UniProtKB" id="Q6UXV0"/>
    </source>
</evidence>
<evidence type="ECO:0000255" key="2"/>
<evidence type="ECO:0000269" key="3">
    <source>
    </source>
</evidence>
<evidence type="ECO:0000269" key="4">
    <source>
    </source>
</evidence>
<evidence type="ECO:0000269" key="5">
    <source>
    </source>
</evidence>
<evidence type="ECO:0000269" key="6">
    <source>
    </source>
</evidence>
<evidence type="ECO:0000269" key="7">
    <source>
    </source>
</evidence>
<evidence type="ECO:0000269" key="8">
    <source>
    </source>
</evidence>
<evidence type="ECO:0000269" key="9">
    <source>
    </source>
</evidence>
<evidence type="ECO:0000269" key="10">
    <source>
    </source>
</evidence>
<evidence type="ECO:0000269" key="11">
    <source>
    </source>
</evidence>
<evidence type="ECO:0000269" key="12">
    <source>
    </source>
</evidence>
<evidence type="ECO:0000269" key="13">
    <source>
    </source>
</evidence>
<evidence type="ECO:0000269" key="14">
    <source>
    </source>
</evidence>
<evidence type="ECO:0000269" key="15">
    <source>
    </source>
</evidence>
<evidence type="ECO:0000303" key="16">
    <source ref="1"/>
</evidence>
<evidence type="ECO:0000305" key="17"/>
<evidence type="ECO:0000305" key="18">
    <source>
    </source>
</evidence>
<keyword id="KW-0025">Alternative splicing</keyword>
<keyword id="KW-1003">Cell membrane</keyword>
<keyword id="KW-1015">Disulfide bond</keyword>
<keyword id="KW-0325">Glycoprotein</keyword>
<keyword id="KW-0372">Hormone</keyword>
<keyword id="KW-0472">Membrane</keyword>
<keyword id="KW-0675">Receptor</keyword>
<keyword id="KW-1185">Reference proteome</keyword>
<keyword id="KW-0732">Signal</keyword>
<keyword id="KW-0812">Transmembrane</keyword>
<keyword id="KW-1133">Transmembrane helix</keyword>